<accession>A1UHA0</accession>
<keyword id="KW-0028">Amino-acid biosynthesis</keyword>
<keyword id="KW-0055">Arginine biosynthesis</keyword>
<keyword id="KW-0067">ATP-binding</keyword>
<keyword id="KW-0963">Cytoplasm</keyword>
<keyword id="KW-0418">Kinase</keyword>
<keyword id="KW-0547">Nucleotide-binding</keyword>
<keyword id="KW-0808">Transferase</keyword>
<name>ARGB_MYCSK</name>
<proteinExistence type="inferred from homology"/>
<reference key="1">
    <citation type="submission" date="2006-12" db="EMBL/GenBank/DDBJ databases">
        <title>Complete sequence of chromosome of Mycobacterium sp. KMS.</title>
        <authorList>
            <consortium name="US DOE Joint Genome Institute"/>
            <person name="Copeland A."/>
            <person name="Lucas S."/>
            <person name="Lapidus A."/>
            <person name="Barry K."/>
            <person name="Detter J.C."/>
            <person name="Glavina del Rio T."/>
            <person name="Hammon N."/>
            <person name="Israni S."/>
            <person name="Dalin E."/>
            <person name="Tice H."/>
            <person name="Pitluck S."/>
            <person name="Kiss H."/>
            <person name="Brettin T."/>
            <person name="Bruce D."/>
            <person name="Han C."/>
            <person name="Tapia R."/>
            <person name="Gilna P."/>
            <person name="Schmutz J."/>
            <person name="Larimer F."/>
            <person name="Land M."/>
            <person name="Hauser L."/>
            <person name="Kyrpides N."/>
            <person name="Mikhailova N."/>
            <person name="Miller C.D."/>
            <person name="Richardson P."/>
        </authorList>
    </citation>
    <scope>NUCLEOTIDE SEQUENCE [LARGE SCALE GENOMIC DNA]</scope>
    <source>
        <strain>KMS</strain>
    </source>
</reference>
<dbReference type="EC" id="2.7.2.8" evidence="1"/>
<dbReference type="EMBL" id="CP000518">
    <property type="protein sequence ID" value="ABL92208.1"/>
    <property type="molecule type" value="Genomic_DNA"/>
</dbReference>
<dbReference type="SMR" id="A1UHA0"/>
<dbReference type="STRING" id="189918.Mkms_3014"/>
<dbReference type="KEGG" id="mkm:Mkms_3014"/>
<dbReference type="HOGENOM" id="CLU_053680_0_1_11"/>
<dbReference type="OrthoDB" id="9803155at2"/>
<dbReference type="UniPathway" id="UPA00068">
    <property type="reaction ID" value="UER00107"/>
</dbReference>
<dbReference type="GO" id="GO:0005737">
    <property type="term" value="C:cytoplasm"/>
    <property type="evidence" value="ECO:0007669"/>
    <property type="project" value="UniProtKB-SubCell"/>
</dbReference>
<dbReference type="GO" id="GO:0003991">
    <property type="term" value="F:acetylglutamate kinase activity"/>
    <property type="evidence" value="ECO:0007669"/>
    <property type="project" value="UniProtKB-UniRule"/>
</dbReference>
<dbReference type="GO" id="GO:0005524">
    <property type="term" value="F:ATP binding"/>
    <property type="evidence" value="ECO:0007669"/>
    <property type="project" value="UniProtKB-UniRule"/>
</dbReference>
<dbReference type="GO" id="GO:0042450">
    <property type="term" value="P:arginine biosynthetic process via ornithine"/>
    <property type="evidence" value="ECO:0007669"/>
    <property type="project" value="UniProtKB-UniRule"/>
</dbReference>
<dbReference type="GO" id="GO:0006526">
    <property type="term" value="P:L-arginine biosynthetic process"/>
    <property type="evidence" value="ECO:0007669"/>
    <property type="project" value="UniProtKB-UniPathway"/>
</dbReference>
<dbReference type="CDD" id="cd04250">
    <property type="entry name" value="AAK_NAGK-C"/>
    <property type="match status" value="1"/>
</dbReference>
<dbReference type="FunFam" id="3.40.1160.10:FF:000004">
    <property type="entry name" value="Acetylglutamate kinase"/>
    <property type="match status" value="1"/>
</dbReference>
<dbReference type="Gene3D" id="3.40.1160.10">
    <property type="entry name" value="Acetylglutamate kinase-like"/>
    <property type="match status" value="1"/>
</dbReference>
<dbReference type="HAMAP" id="MF_00082">
    <property type="entry name" value="ArgB"/>
    <property type="match status" value="1"/>
</dbReference>
<dbReference type="InterPro" id="IPR036393">
    <property type="entry name" value="AceGlu_kinase-like_sf"/>
</dbReference>
<dbReference type="InterPro" id="IPR004662">
    <property type="entry name" value="AcgluKinase_fam"/>
</dbReference>
<dbReference type="InterPro" id="IPR037528">
    <property type="entry name" value="ArgB"/>
</dbReference>
<dbReference type="InterPro" id="IPR001048">
    <property type="entry name" value="Asp/Glu/Uridylate_kinase"/>
</dbReference>
<dbReference type="InterPro" id="IPR001057">
    <property type="entry name" value="Glu/AcGlu_kinase"/>
</dbReference>
<dbReference type="InterPro" id="IPR041727">
    <property type="entry name" value="NAGK-C"/>
</dbReference>
<dbReference type="NCBIfam" id="TIGR00761">
    <property type="entry name" value="argB"/>
    <property type="match status" value="1"/>
</dbReference>
<dbReference type="PANTHER" id="PTHR23342">
    <property type="entry name" value="N-ACETYLGLUTAMATE SYNTHASE"/>
    <property type="match status" value="1"/>
</dbReference>
<dbReference type="PANTHER" id="PTHR23342:SF0">
    <property type="entry name" value="N-ACETYLGLUTAMATE SYNTHASE, MITOCHONDRIAL"/>
    <property type="match status" value="1"/>
</dbReference>
<dbReference type="Pfam" id="PF00696">
    <property type="entry name" value="AA_kinase"/>
    <property type="match status" value="1"/>
</dbReference>
<dbReference type="PIRSF" id="PIRSF000728">
    <property type="entry name" value="NAGK"/>
    <property type="match status" value="1"/>
</dbReference>
<dbReference type="PRINTS" id="PR00474">
    <property type="entry name" value="GLU5KINASE"/>
</dbReference>
<dbReference type="SUPFAM" id="SSF53633">
    <property type="entry name" value="Carbamate kinase-like"/>
    <property type="match status" value="1"/>
</dbReference>
<comment type="function">
    <text evidence="1">Catalyzes the ATP-dependent phosphorylation of N-acetyl-L-glutamate.</text>
</comment>
<comment type="catalytic activity">
    <reaction evidence="1">
        <text>N-acetyl-L-glutamate + ATP = N-acetyl-L-glutamyl 5-phosphate + ADP</text>
        <dbReference type="Rhea" id="RHEA:14629"/>
        <dbReference type="ChEBI" id="CHEBI:30616"/>
        <dbReference type="ChEBI" id="CHEBI:44337"/>
        <dbReference type="ChEBI" id="CHEBI:57936"/>
        <dbReference type="ChEBI" id="CHEBI:456216"/>
        <dbReference type="EC" id="2.7.2.8"/>
    </reaction>
</comment>
<comment type="pathway">
    <text evidence="1">Amino-acid biosynthesis; L-arginine biosynthesis; N(2)-acetyl-L-ornithine from L-glutamate: step 2/4.</text>
</comment>
<comment type="subcellular location">
    <subcellularLocation>
        <location evidence="1">Cytoplasm</location>
    </subcellularLocation>
</comment>
<comment type="similarity">
    <text evidence="1">Belongs to the acetylglutamate kinase family. ArgB subfamily.</text>
</comment>
<gene>
    <name evidence="1" type="primary">argB</name>
    <name type="ordered locus">Mkms_3014</name>
</gene>
<sequence length="290" mass="30512">MTAATHTKAQVLAAALPWLKQLHGKIVVVKYGGNAMTDDTLKAAFAADMVFLRNCGVHPVVVHGGGLQISAMLKRLGIPGDFRGGFRVTTPEVLDVARMVLFGQVGRELVGLINAHGPYAVGITGEDAHLFTAVRRDVVVDGVATDIGLVGDVEHVNTEAVRDLIAAGRIPVVSTIAPDANGVVHNINADTAAAALAAALSAEKLLMLTDIEGLYTDWPDRNSLVSQINTDELTELLPTLEAGMVPKIEACLRAVTEGVPSAHVIDGRVEHCVLVELFTDEGTGTKVVNP</sequence>
<organism>
    <name type="scientific">Mycobacterium sp. (strain KMS)</name>
    <dbReference type="NCBI Taxonomy" id="189918"/>
    <lineage>
        <taxon>Bacteria</taxon>
        <taxon>Bacillati</taxon>
        <taxon>Actinomycetota</taxon>
        <taxon>Actinomycetes</taxon>
        <taxon>Mycobacteriales</taxon>
        <taxon>Mycobacteriaceae</taxon>
        <taxon>Mycobacterium</taxon>
    </lineage>
</organism>
<feature type="chain" id="PRO_1000010514" description="Acetylglutamate kinase">
    <location>
        <begin position="1"/>
        <end position="290"/>
    </location>
</feature>
<feature type="binding site" evidence="1">
    <location>
        <begin position="65"/>
        <end position="66"/>
    </location>
    <ligand>
        <name>substrate</name>
    </ligand>
</feature>
<feature type="binding site" evidence="1">
    <location>
        <position position="87"/>
    </location>
    <ligand>
        <name>substrate</name>
    </ligand>
</feature>
<feature type="binding site" evidence="1">
    <location>
        <position position="186"/>
    </location>
    <ligand>
        <name>substrate</name>
    </ligand>
</feature>
<feature type="site" description="Transition state stabilizer" evidence="1">
    <location>
        <position position="30"/>
    </location>
</feature>
<feature type="site" description="Transition state stabilizer" evidence="1">
    <location>
        <position position="247"/>
    </location>
</feature>
<protein>
    <recommendedName>
        <fullName evidence="1">Acetylglutamate kinase</fullName>
        <ecNumber evidence="1">2.7.2.8</ecNumber>
    </recommendedName>
    <alternativeName>
        <fullName evidence="1">N-acetyl-L-glutamate 5-phosphotransferase</fullName>
    </alternativeName>
    <alternativeName>
        <fullName evidence="1">NAG kinase</fullName>
        <shortName evidence="1">NAGK</shortName>
    </alternativeName>
</protein>
<evidence type="ECO:0000255" key="1">
    <source>
        <dbReference type="HAMAP-Rule" id="MF_00082"/>
    </source>
</evidence>